<comment type="function">
    <text evidence="2">RNA-binding component of the eukaryotic translation initiation factor 3 (eIF-3) complex, which is involved in protein synthesis of a specialized repertoire of mRNAs and, together with other initiation factors, stimulates binding of mRNA and methionyl-tRNAi to the 40S ribosome. The eIF-3 complex specifically targets and initiates translation of a subset of mRNAs involved in cell proliferation. This subunit can bind 18S rRNA.</text>
</comment>
<comment type="subunit">
    <text evidence="2">Component of the eukaryotic translation initiation factor 3 (eIF-3) complex. The eIF-3 complex interacts with pix.</text>
</comment>
<comment type="subcellular location">
    <subcellularLocation>
        <location evidence="2">Cytoplasm</location>
    </subcellularLocation>
</comment>
<comment type="similarity">
    <text evidence="2">Belongs to the eIF-3 subunit G family.</text>
</comment>
<proteinExistence type="inferred from homology"/>
<accession>B4NFY1</accession>
<reference key="1">
    <citation type="journal article" date="2007" name="Nature">
        <title>Evolution of genes and genomes on the Drosophila phylogeny.</title>
        <authorList>
            <consortium name="Drosophila 12 genomes consortium"/>
        </authorList>
    </citation>
    <scope>NUCLEOTIDE SEQUENCE [LARGE SCALE GENOMIC DNA]</scope>
    <source>
        <strain>Tucson 14030-0811.24</strain>
    </source>
</reference>
<gene>
    <name evidence="1" type="primary">eIF3g2</name>
    <name evidence="2" type="synonym">eIF3-S4</name>
    <name evidence="1" type="synonym">eIF3gb</name>
    <name type="ORF">GK22449</name>
</gene>
<name>EI3G2_DROWI</name>
<keyword id="KW-0963">Cytoplasm</keyword>
<keyword id="KW-0396">Initiation factor</keyword>
<keyword id="KW-0648">Protein biosynthesis</keyword>
<keyword id="KW-1185">Reference proteome</keyword>
<keyword id="KW-0694">RNA-binding</keyword>
<sequence length="268" mass="30079">MKPIKTSWADEVEADYVDGLPPAKEYIEGEYKYVTEYKYNEDGKKIKVVRTFKIKKQVVSKAVAKRRNWVKFGESSSDKPGPNSQTTMAAEEIFMLFMGSKEFEQTNELQIDPGKNIAKCRICNGEHWSVNCPYKGTAMDSKTMMENKATAAAAAVGDPKSGKYVPPFLKEGGASGKPWARERDDSSAVRISNLSESMTEVDLEELVKKIGPHTKMYLAREKNTGLCKGFAYVHFKFRQDAAAAIEILNGHGYDHLILCVEWSKPQNQ</sequence>
<organism>
    <name type="scientific">Drosophila willistoni</name>
    <name type="common">Fruit fly</name>
    <dbReference type="NCBI Taxonomy" id="7260"/>
    <lineage>
        <taxon>Eukaryota</taxon>
        <taxon>Metazoa</taxon>
        <taxon>Ecdysozoa</taxon>
        <taxon>Arthropoda</taxon>
        <taxon>Hexapoda</taxon>
        <taxon>Insecta</taxon>
        <taxon>Pterygota</taxon>
        <taxon>Neoptera</taxon>
        <taxon>Endopterygota</taxon>
        <taxon>Diptera</taxon>
        <taxon>Brachycera</taxon>
        <taxon>Muscomorpha</taxon>
        <taxon>Ephydroidea</taxon>
        <taxon>Drosophilidae</taxon>
        <taxon>Drosophila</taxon>
        <taxon>Sophophora</taxon>
    </lineage>
</organism>
<dbReference type="EMBL" id="CH964251">
    <property type="protein sequence ID" value="EDW83198.1"/>
    <property type="molecule type" value="Genomic_DNA"/>
</dbReference>
<dbReference type="SMR" id="B4NFY1"/>
<dbReference type="STRING" id="7260.B4NFY1"/>
<dbReference type="EnsemblMetazoa" id="FBtr0253100">
    <property type="protein sequence ID" value="FBpp0251592"/>
    <property type="gene ID" value="FBgn0224426"/>
</dbReference>
<dbReference type="EnsemblMetazoa" id="XM_002072176.4">
    <property type="protein sequence ID" value="XP_002072212.1"/>
    <property type="gene ID" value="LOC6649503"/>
</dbReference>
<dbReference type="GeneID" id="6649503"/>
<dbReference type="KEGG" id="dwi:6649503"/>
<dbReference type="CTD" id="42422"/>
<dbReference type="eggNOG" id="KOG0122">
    <property type="taxonomic scope" value="Eukaryota"/>
</dbReference>
<dbReference type="HOGENOM" id="CLU_034595_0_0_1"/>
<dbReference type="OMA" id="EEVHMVF"/>
<dbReference type="OrthoDB" id="639027at2759"/>
<dbReference type="PhylomeDB" id="B4NFY1"/>
<dbReference type="Proteomes" id="UP000007798">
    <property type="component" value="Unassembled WGS sequence"/>
</dbReference>
<dbReference type="GO" id="GO:0016282">
    <property type="term" value="C:eukaryotic 43S preinitiation complex"/>
    <property type="evidence" value="ECO:0007669"/>
    <property type="project" value="UniProtKB-UniRule"/>
</dbReference>
<dbReference type="GO" id="GO:0033290">
    <property type="term" value="C:eukaryotic 48S preinitiation complex"/>
    <property type="evidence" value="ECO:0007669"/>
    <property type="project" value="UniProtKB-UniRule"/>
</dbReference>
<dbReference type="GO" id="GO:0005852">
    <property type="term" value="C:eukaryotic translation initiation factor 3 complex"/>
    <property type="evidence" value="ECO:0007669"/>
    <property type="project" value="UniProtKB-UniRule"/>
</dbReference>
<dbReference type="GO" id="GO:0003723">
    <property type="term" value="F:RNA binding"/>
    <property type="evidence" value="ECO:0007669"/>
    <property type="project" value="UniProtKB-UniRule"/>
</dbReference>
<dbReference type="GO" id="GO:0003743">
    <property type="term" value="F:translation initiation factor activity"/>
    <property type="evidence" value="ECO:0007669"/>
    <property type="project" value="UniProtKB-UniRule"/>
</dbReference>
<dbReference type="GO" id="GO:0001732">
    <property type="term" value="P:formation of cytoplasmic translation initiation complex"/>
    <property type="evidence" value="ECO:0007669"/>
    <property type="project" value="UniProtKB-UniRule"/>
</dbReference>
<dbReference type="CDD" id="cd12933">
    <property type="entry name" value="eIF3G"/>
    <property type="match status" value="1"/>
</dbReference>
<dbReference type="CDD" id="cd12408">
    <property type="entry name" value="RRM_eIF3G_like"/>
    <property type="match status" value="1"/>
</dbReference>
<dbReference type="FunFam" id="3.30.70.330:FF:000828">
    <property type="entry name" value="Eukaryotic translation initiation factor 3 subunit G"/>
    <property type="match status" value="1"/>
</dbReference>
<dbReference type="Gene3D" id="3.30.70.330">
    <property type="match status" value="1"/>
</dbReference>
<dbReference type="HAMAP" id="MF_03006">
    <property type="entry name" value="eIF3g"/>
    <property type="match status" value="1"/>
</dbReference>
<dbReference type="InterPro" id="IPR017334">
    <property type="entry name" value="eIF3_g"/>
</dbReference>
<dbReference type="InterPro" id="IPR024675">
    <property type="entry name" value="eIF3g_N"/>
</dbReference>
<dbReference type="InterPro" id="IPR034240">
    <property type="entry name" value="eIF3G_RRM"/>
</dbReference>
<dbReference type="InterPro" id="IPR012677">
    <property type="entry name" value="Nucleotide-bd_a/b_plait_sf"/>
</dbReference>
<dbReference type="InterPro" id="IPR035979">
    <property type="entry name" value="RBD_domain_sf"/>
</dbReference>
<dbReference type="InterPro" id="IPR000504">
    <property type="entry name" value="RRM_dom"/>
</dbReference>
<dbReference type="PANTHER" id="PTHR10352">
    <property type="entry name" value="EUKARYOTIC TRANSLATION INITIATION FACTOR 3 SUBUNIT G"/>
    <property type="match status" value="1"/>
</dbReference>
<dbReference type="Pfam" id="PF12353">
    <property type="entry name" value="eIF3g"/>
    <property type="match status" value="1"/>
</dbReference>
<dbReference type="Pfam" id="PF00076">
    <property type="entry name" value="RRM_1"/>
    <property type="match status" value="1"/>
</dbReference>
<dbReference type="PIRSF" id="PIRSF037949">
    <property type="entry name" value="Transl_init_eIF-3_RNA-bind"/>
    <property type="match status" value="1"/>
</dbReference>
<dbReference type="SMART" id="SM00360">
    <property type="entry name" value="RRM"/>
    <property type="match status" value="1"/>
</dbReference>
<dbReference type="SUPFAM" id="SSF54928">
    <property type="entry name" value="RNA-binding domain, RBD"/>
    <property type="match status" value="1"/>
</dbReference>
<dbReference type="PROSITE" id="PS50102">
    <property type="entry name" value="RRM"/>
    <property type="match status" value="1"/>
</dbReference>
<protein>
    <recommendedName>
        <fullName evidence="1">Eukaryotic translation initiation factor 3 subunit G-2</fullName>
    </recommendedName>
    <alternativeName>
        <fullName evidence="2">Eukaryotic translation initiation factor 3 RNA-binding subunit 2</fullName>
        <shortName evidence="2">eIF-3 RNA-binding subunit 2</shortName>
    </alternativeName>
    <alternativeName>
        <fullName evidence="2">Eukaryotic translation initiation factor 3 subunit 4-2</fullName>
    </alternativeName>
</protein>
<feature type="chain" id="PRO_0000365428" description="Eukaryotic translation initiation factor 3 subunit G-2">
    <location>
        <begin position="1"/>
        <end position="268"/>
    </location>
</feature>
<feature type="domain" description="RRM" evidence="2">
    <location>
        <begin position="187"/>
        <end position="265"/>
    </location>
</feature>
<evidence type="ECO:0000250" key="1">
    <source>
        <dbReference type="UniProtKB" id="Q9VDM6"/>
    </source>
</evidence>
<evidence type="ECO:0000255" key="2">
    <source>
        <dbReference type="HAMAP-Rule" id="MF_03006"/>
    </source>
</evidence>